<sequence>MSDLPATVLERIIEQAQRRPEAIALRRCDGTSALPYSELAAEVDRYAGALRAQSASRGSRVLVISDNGPETYLAVLACAKLGAIAVMADGNLPPATIDRFCQITDPVAVLIAPGSKVGSSSLPEGLAAIPAIRVDIGSGTGEFAHSPDTDRPATEPGLGADDPLAMIFTSGTTGEPKAVLLANRTFFAVPDILRNEGLNWVTWVDGETTYSPLPATHIGGLWWILTCLMRGGLCITGGENTPSLMQILNSNAVNTTCLVPTLLSKLVSELKSAATTVPSLRLLGYGGSRAIAADVRFIEATGVRTAQVYGLSETGCTALCLPTDDDSIAKIEAGAVGRPYPGVEVYLAADDEADGAGPNAPGAGPSASFGTLWIKSPANMLGYWSNPQRTQEVLIDGWVNTGDLLERHEDGFFYIKGRSSEMIISGGVNIAPDEVDRIAEGVPGVREAACFEIPDPEFGALVGLAVVAATDMDASAARKLKHTIAAHYRRESESVARPSTIVIVSEIPRTQSGKVMRTSLAAAANQVQTGG</sequence>
<protein>
    <recommendedName>
        <fullName evidence="6">Fatty acid--[acyl-carrier-protein] ligase MmaC</fullName>
        <ecNumber evidence="3">6.2.1.-</ecNumber>
    </recommendedName>
</protein>
<organism>
    <name type="scientific">Mycobacterium marinum (strain ATCC BAA-535 / M)</name>
    <dbReference type="NCBI Taxonomy" id="216594"/>
    <lineage>
        <taxon>Bacteria</taxon>
        <taxon>Bacillati</taxon>
        <taxon>Actinomycetota</taxon>
        <taxon>Actinomycetes</taxon>
        <taxon>Mycobacteriales</taxon>
        <taxon>Mycobacteriaceae</taxon>
        <taxon>Mycobacterium</taxon>
        <taxon>Mycobacterium ulcerans group</taxon>
    </lineage>
</organism>
<accession>B2HKM1</accession>
<dbReference type="EC" id="6.2.1.-" evidence="3"/>
<dbReference type="EMBL" id="CP000854">
    <property type="protein sequence ID" value="ACC38726.1"/>
    <property type="molecule type" value="Genomic_DNA"/>
</dbReference>
<dbReference type="RefSeq" id="WP_012392252.1">
    <property type="nucleotide sequence ID" value="NC_010612.1"/>
</dbReference>
<dbReference type="SMR" id="B2HKM1"/>
<dbReference type="STRING" id="216594.MMAR_0258"/>
<dbReference type="KEGG" id="mmi:MMAR_0258"/>
<dbReference type="eggNOG" id="COG0318">
    <property type="taxonomic scope" value="Bacteria"/>
</dbReference>
<dbReference type="HOGENOM" id="CLU_000022_59_0_11"/>
<dbReference type="Proteomes" id="UP000001190">
    <property type="component" value="Chromosome"/>
</dbReference>
<dbReference type="GO" id="GO:0016878">
    <property type="term" value="F:acid-thiol ligase activity"/>
    <property type="evidence" value="ECO:0007669"/>
    <property type="project" value="UniProtKB-ARBA"/>
</dbReference>
<dbReference type="GO" id="GO:0005524">
    <property type="term" value="F:ATP binding"/>
    <property type="evidence" value="ECO:0007669"/>
    <property type="project" value="UniProtKB-KW"/>
</dbReference>
<dbReference type="GO" id="GO:0046872">
    <property type="term" value="F:metal ion binding"/>
    <property type="evidence" value="ECO:0007669"/>
    <property type="project" value="UniProtKB-KW"/>
</dbReference>
<dbReference type="GO" id="GO:0006631">
    <property type="term" value="P:fatty acid metabolic process"/>
    <property type="evidence" value="ECO:0007669"/>
    <property type="project" value="UniProtKB-KW"/>
</dbReference>
<dbReference type="Gene3D" id="3.30.300.30">
    <property type="match status" value="1"/>
</dbReference>
<dbReference type="Gene3D" id="3.40.50.12780">
    <property type="entry name" value="N-terminal domain of ligase-like"/>
    <property type="match status" value="1"/>
</dbReference>
<dbReference type="InterPro" id="IPR025110">
    <property type="entry name" value="AMP-bd_C"/>
</dbReference>
<dbReference type="InterPro" id="IPR045851">
    <property type="entry name" value="AMP-bd_C_sf"/>
</dbReference>
<dbReference type="InterPro" id="IPR020845">
    <property type="entry name" value="AMP-binding_CS"/>
</dbReference>
<dbReference type="InterPro" id="IPR000873">
    <property type="entry name" value="AMP-dep_synth/lig_dom"/>
</dbReference>
<dbReference type="InterPro" id="IPR042099">
    <property type="entry name" value="ANL_N_sf"/>
</dbReference>
<dbReference type="InterPro" id="IPR050237">
    <property type="entry name" value="ATP-dep_AMP-bd_enzyme"/>
</dbReference>
<dbReference type="NCBIfam" id="NF004515">
    <property type="entry name" value="PRK05857.1"/>
    <property type="match status" value="1"/>
</dbReference>
<dbReference type="PANTHER" id="PTHR43767">
    <property type="entry name" value="LONG-CHAIN-FATTY-ACID--COA LIGASE"/>
    <property type="match status" value="1"/>
</dbReference>
<dbReference type="PANTHER" id="PTHR43767:SF1">
    <property type="entry name" value="NONRIBOSOMAL PEPTIDE SYNTHASE PES1 (EUROFUNG)-RELATED"/>
    <property type="match status" value="1"/>
</dbReference>
<dbReference type="Pfam" id="PF00501">
    <property type="entry name" value="AMP-binding"/>
    <property type="match status" value="1"/>
</dbReference>
<dbReference type="Pfam" id="PF13193">
    <property type="entry name" value="AMP-binding_C"/>
    <property type="match status" value="1"/>
</dbReference>
<dbReference type="SUPFAM" id="SSF56801">
    <property type="entry name" value="Acetyl-CoA synthetase-like"/>
    <property type="match status" value="1"/>
</dbReference>
<dbReference type="PROSITE" id="PS00455">
    <property type="entry name" value="AMP_BINDING"/>
    <property type="match status" value="1"/>
</dbReference>
<keyword id="KW-0067">ATP-binding</keyword>
<keyword id="KW-0276">Fatty acid metabolism</keyword>
<keyword id="KW-0436">Ligase</keyword>
<keyword id="KW-0443">Lipid metabolism</keyword>
<keyword id="KW-0460">Magnesium</keyword>
<keyword id="KW-0479">Metal-binding</keyword>
<keyword id="KW-0547">Nucleotide-binding</keyword>
<keyword id="KW-1185">Reference proteome</keyword>
<comment type="function">
    <text evidence="3 7">Acyl:acyl-carrier protein ligase involved in the biosynthesis of a unique class of isonitrile lipopeptides (INLPs) that seem to play a role in metal acquisition in M.marinum. Acts twice during the INLP pathway, catalyzing the activation of (2E)-2-decenoate as well as probably the corresponding (3R)-3-isocyanyl-fatty acid as acyl-adenylates (acyl-AMP), and then the acyl transfer to the dedicated acyl-carrier protein MmaB.</text>
</comment>
<comment type="catalytic activity">
    <reaction evidence="3">
        <text>a (2E)-enoyl fatty acid + holo-[ACP] + ATP = a (2E)-enoyl-[ACP] + AMP + diphosphate</text>
        <dbReference type="Rhea" id="RHEA:74911"/>
        <dbReference type="Rhea" id="RHEA-COMP:9685"/>
        <dbReference type="Rhea" id="RHEA-COMP:9925"/>
        <dbReference type="ChEBI" id="CHEBI:30616"/>
        <dbReference type="ChEBI" id="CHEBI:33019"/>
        <dbReference type="ChEBI" id="CHEBI:64479"/>
        <dbReference type="ChEBI" id="CHEBI:78784"/>
        <dbReference type="ChEBI" id="CHEBI:194103"/>
        <dbReference type="ChEBI" id="CHEBI:456215"/>
    </reaction>
    <physiologicalReaction direction="left-to-right" evidence="6">
        <dbReference type="Rhea" id="RHEA:74912"/>
    </physiologicalReaction>
</comment>
<comment type="catalytic activity">
    <reaction evidence="6">
        <text>a (2E)-enoyl fatty acid + ATP + H(+) = a (2E)-2-fatty-enoyl-AMP + diphosphate</text>
        <dbReference type="Rhea" id="RHEA:74915"/>
        <dbReference type="ChEBI" id="CHEBI:15378"/>
        <dbReference type="ChEBI" id="CHEBI:30616"/>
        <dbReference type="ChEBI" id="CHEBI:33019"/>
        <dbReference type="ChEBI" id="CHEBI:194103"/>
        <dbReference type="ChEBI" id="CHEBI:194106"/>
    </reaction>
    <physiologicalReaction direction="left-to-right" evidence="6">
        <dbReference type="Rhea" id="RHEA:74916"/>
    </physiologicalReaction>
</comment>
<comment type="catalytic activity">
    <reaction evidence="6">
        <text>a (2E)-2-fatty-enoyl-AMP + holo-[ACP] = a (2E)-enoyl-[ACP] + AMP + H(+)</text>
        <dbReference type="Rhea" id="RHEA:74919"/>
        <dbReference type="Rhea" id="RHEA-COMP:9685"/>
        <dbReference type="Rhea" id="RHEA-COMP:9925"/>
        <dbReference type="ChEBI" id="CHEBI:15378"/>
        <dbReference type="ChEBI" id="CHEBI:64479"/>
        <dbReference type="ChEBI" id="CHEBI:78784"/>
        <dbReference type="ChEBI" id="CHEBI:194106"/>
        <dbReference type="ChEBI" id="CHEBI:456215"/>
    </reaction>
    <physiologicalReaction direction="left-to-right" evidence="6">
        <dbReference type="Rhea" id="RHEA:74920"/>
    </physiologicalReaction>
</comment>
<comment type="catalytic activity">
    <reaction evidence="3">
        <text>(2E)-decenoate + holo-[ACP] + ATP = (2E)-decenoyl-[ACP] + AMP + diphosphate</text>
        <dbReference type="Rhea" id="RHEA:75539"/>
        <dbReference type="Rhea" id="RHEA-COMP:9639"/>
        <dbReference type="Rhea" id="RHEA-COMP:9685"/>
        <dbReference type="ChEBI" id="CHEBI:30616"/>
        <dbReference type="ChEBI" id="CHEBI:33019"/>
        <dbReference type="ChEBI" id="CHEBI:64479"/>
        <dbReference type="ChEBI" id="CHEBI:78467"/>
        <dbReference type="ChEBI" id="CHEBI:143529"/>
        <dbReference type="ChEBI" id="CHEBI:456215"/>
    </reaction>
    <physiologicalReaction direction="left-to-right" evidence="6">
        <dbReference type="Rhea" id="RHEA:75540"/>
    </physiologicalReaction>
</comment>
<comment type="catalytic activity">
    <reaction evidence="1">
        <text>a (3R)-3-isocyanyl-fatty acid + holo-[ACP] + ATP = a (3R)-3-isocyanyl-fatty acyl-[ACP] + AMP + diphosphate</text>
        <dbReference type="Rhea" id="RHEA:74955"/>
        <dbReference type="Rhea" id="RHEA-COMP:9685"/>
        <dbReference type="Rhea" id="RHEA-COMP:18454"/>
        <dbReference type="ChEBI" id="CHEBI:30616"/>
        <dbReference type="ChEBI" id="CHEBI:33019"/>
        <dbReference type="ChEBI" id="CHEBI:64479"/>
        <dbReference type="ChEBI" id="CHEBI:193084"/>
        <dbReference type="ChEBI" id="CHEBI:194105"/>
        <dbReference type="ChEBI" id="CHEBI:456215"/>
    </reaction>
    <physiologicalReaction direction="left-to-right" evidence="1">
        <dbReference type="Rhea" id="RHEA:74956"/>
    </physiologicalReaction>
</comment>
<comment type="catalytic activity">
    <reaction evidence="1">
        <text>a (3R)-3-isocyanyl-fatty acid + ATP + H(+) = a (3R)-3-isocyanyl-fatty acyl-AMP + diphosphate</text>
        <dbReference type="Rhea" id="RHEA:74967"/>
        <dbReference type="ChEBI" id="CHEBI:15378"/>
        <dbReference type="ChEBI" id="CHEBI:30616"/>
        <dbReference type="ChEBI" id="CHEBI:33019"/>
        <dbReference type="ChEBI" id="CHEBI:193084"/>
        <dbReference type="ChEBI" id="CHEBI:194104"/>
    </reaction>
    <physiologicalReaction direction="left-to-right" evidence="1">
        <dbReference type="Rhea" id="RHEA:74968"/>
    </physiologicalReaction>
</comment>
<comment type="catalytic activity">
    <reaction evidence="1">
        <text>a (3R)-3-isocyanyl-fatty acyl-AMP + holo-[ACP] = a (3R)-3-isocyanyl-fatty acyl-[ACP] + AMP + H(+)</text>
        <dbReference type="Rhea" id="RHEA:74975"/>
        <dbReference type="Rhea" id="RHEA-COMP:9685"/>
        <dbReference type="Rhea" id="RHEA-COMP:18454"/>
        <dbReference type="ChEBI" id="CHEBI:15378"/>
        <dbReference type="ChEBI" id="CHEBI:64479"/>
        <dbReference type="ChEBI" id="CHEBI:194104"/>
        <dbReference type="ChEBI" id="CHEBI:194105"/>
        <dbReference type="ChEBI" id="CHEBI:456215"/>
    </reaction>
    <physiologicalReaction direction="left-to-right" evidence="1">
        <dbReference type="Rhea" id="RHEA:74976"/>
    </physiologicalReaction>
</comment>
<comment type="cofactor">
    <cofactor evidence="2">
        <name>Mg(2+)</name>
        <dbReference type="ChEBI" id="CHEBI:18420"/>
    </cofactor>
</comment>
<comment type="disruption phenotype">
    <text evidence="3">Deletion of the gene cluster mmaABCDE causes a significant decrease in the intracellular accumulation of zinc in Sauton's medium where metal concentrations are relatively low.</text>
</comment>
<comment type="similarity">
    <text evidence="5">Belongs to the ATP-dependent AMP-binding enzyme family.</text>
</comment>
<evidence type="ECO:0000250" key="1">
    <source>
        <dbReference type="UniProtKB" id="P0DX14"/>
    </source>
</evidence>
<evidence type="ECO:0000250" key="2">
    <source>
        <dbReference type="UniProtKB" id="Q5SKN9"/>
    </source>
</evidence>
<evidence type="ECO:0000269" key="3">
    <source>
    </source>
</evidence>
<evidence type="ECO:0000303" key="4">
    <source>
    </source>
</evidence>
<evidence type="ECO:0000305" key="5"/>
<evidence type="ECO:0000305" key="6">
    <source>
    </source>
</evidence>
<evidence type="ECO:0000305" key="7">
    <source>
    </source>
</evidence>
<evidence type="ECO:0000312" key="8">
    <source>
        <dbReference type="EMBL" id="ACC38726.1"/>
    </source>
</evidence>
<feature type="chain" id="PRO_0000458126" description="Fatty acid--[acyl-carrier-protein] ligase MmaC">
    <location>
        <begin position="1"/>
        <end position="531"/>
    </location>
</feature>
<feature type="binding site" evidence="2">
    <location>
        <position position="169"/>
    </location>
    <ligand>
        <name>Mg(2+)</name>
        <dbReference type="ChEBI" id="CHEBI:18420"/>
    </ligand>
</feature>
<feature type="binding site" evidence="2">
    <location>
        <position position="218"/>
    </location>
    <ligand>
        <name>ATP</name>
        <dbReference type="ChEBI" id="CHEBI:30616"/>
    </ligand>
</feature>
<feature type="binding site" evidence="2">
    <location>
        <position position="308"/>
    </location>
    <ligand>
        <name>ATP</name>
        <dbReference type="ChEBI" id="CHEBI:30616"/>
    </ligand>
</feature>
<feature type="binding site" evidence="2">
    <location>
        <position position="312"/>
    </location>
    <ligand>
        <name>ATP</name>
        <dbReference type="ChEBI" id="CHEBI:30616"/>
    </ligand>
</feature>
<feature type="binding site" evidence="2">
    <location>
        <position position="313"/>
    </location>
    <ligand>
        <name>Mg(2+)</name>
        <dbReference type="ChEBI" id="CHEBI:18420"/>
    </ligand>
</feature>
<feature type="binding site" evidence="2">
    <location>
        <position position="403"/>
    </location>
    <ligand>
        <name>ATP</name>
        <dbReference type="ChEBI" id="CHEBI:30616"/>
    </ligand>
</feature>
<name>INLPC_MYCMM</name>
<reference key="1">
    <citation type="journal article" date="2008" name="Genome Res.">
        <title>Insights from the complete genome sequence of Mycobacterium marinum on the evolution of Mycobacterium tuberculosis.</title>
        <authorList>
            <person name="Stinear T.P."/>
            <person name="Seemann T."/>
            <person name="Harrison P.F."/>
            <person name="Jenkin G.A."/>
            <person name="Davies J.K."/>
            <person name="Johnson P.D."/>
            <person name="Abdellah Z."/>
            <person name="Arrowsmith C."/>
            <person name="Chillingworth T."/>
            <person name="Churcher C."/>
            <person name="Clarke K."/>
            <person name="Cronin A."/>
            <person name="Davis P."/>
            <person name="Goodhead I."/>
            <person name="Holroyd N."/>
            <person name="Jagels K."/>
            <person name="Lord A."/>
            <person name="Moule S."/>
            <person name="Mungall K."/>
            <person name="Norbertczak H."/>
            <person name="Quail M.A."/>
            <person name="Rabbinowitsch E."/>
            <person name="Walker D."/>
            <person name="White B."/>
            <person name="Whitehead S."/>
            <person name="Small P.L."/>
            <person name="Brosch R."/>
            <person name="Ramakrishnan L."/>
            <person name="Fischbach M.A."/>
            <person name="Parkhill J."/>
            <person name="Cole S.T."/>
        </authorList>
    </citation>
    <scope>NUCLEOTIDE SEQUENCE [LARGE SCALE GENOMIC DNA]</scope>
    <source>
        <strain>ATCC BAA-535 / M</strain>
    </source>
</reference>
<reference key="2">
    <citation type="journal article" date="2017" name="Proc. Natl. Acad. Sci. U.S.A.">
        <title>Biosynthesis of isonitrile lipopeptides by conserved nonribosomal peptide synthetase gene clusters in Actinobacteria.</title>
        <authorList>
            <person name="Harris N.C."/>
            <person name="Sato M."/>
            <person name="Herman N.A."/>
            <person name="Twigg F."/>
            <person name="Cai W."/>
            <person name="Liu J."/>
            <person name="Zhu X."/>
            <person name="Downey J."/>
            <person name="Khalaf R."/>
            <person name="Martin J."/>
            <person name="Koshino H."/>
            <person name="Zhang W."/>
        </authorList>
    </citation>
    <scope>FUNCTION</scope>
    <scope>CATALYTIC ACTIVITY</scope>
    <scope>DISRUPTION PHENOTYPE</scope>
    <source>
        <strain>ATCC BAA-535 / M</strain>
    </source>
</reference>
<reference key="3">
    <citation type="journal article" date="2018" name="Angew. Chem. Int. Ed. Engl.">
        <title>Isonitrile Formation by a Non-Heme Iron(II)-Dependent Oxidase/Decarboxylase.</title>
        <authorList>
            <person name="Harris N.C."/>
            <person name="Born D.A."/>
            <person name="Cai W."/>
            <person name="Huang Y."/>
            <person name="Martin J."/>
            <person name="Khalaf R."/>
            <person name="Drennan C.L."/>
            <person name="Zhang W."/>
        </authorList>
    </citation>
    <scope>FUNCTION</scope>
</reference>
<proteinExistence type="evidence at protein level"/>
<gene>
    <name evidence="4" type="primary">mmaC</name>
    <name evidence="8" type="synonym">fadD10</name>
    <name evidence="8" type="ordered locus">MMAR_0258</name>
</gene>